<evidence type="ECO:0000255" key="1">
    <source>
        <dbReference type="HAMAP-Rule" id="MF_03116"/>
    </source>
</evidence>
<protein>
    <recommendedName>
        <fullName evidence="1">Methylthioribulose-1-phosphate dehydratase</fullName>
        <shortName evidence="1">MTRu-1-P dehydratase</shortName>
        <ecNumber evidence="1">4.2.1.109</ecNumber>
    </recommendedName>
    <alternativeName>
        <fullName evidence="1">APAF1-interacting protein homolog</fullName>
    </alternativeName>
</protein>
<gene>
    <name evidence="1" type="primary">apip</name>
    <name type="ORF">zgc:103619</name>
</gene>
<accession>Q66I75</accession>
<organism>
    <name type="scientific">Danio rerio</name>
    <name type="common">Zebrafish</name>
    <name type="synonym">Brachydanio rerio</name>
    <dbReference type="NCBI Taxonomy" id="7955"/>
    <lineage>
        <taxon>Eukaryota</taxon>
        <taxon>Metazoa</taxon>
        <taxon>Chordata</taxon>
        <taxon>Craniata</taxon>
        <taxon>Vertebrata</taxon>
        <taxon>Euteleostomi</taxon>
        <taxon>Actinopterygii</taxon>
        <taxon>Neopterygii</taxon>
        <taxon>Teleostei</taxon>
        <taxon>Ostariophysi</taxon>
        <taxon>Cypriniformes</taxon>
        <taxon>Danionidae</taxon>
        <taxon>Danioninae</taxon>
        <taxon>Danio</taxon>
    </lineage>
</organism>
<sequence>MSSVVNAAYAEYNGKEKGDQEDPRVLIPQLCRLFYELGWVTGTGGGISLRHGEHIYIAPSGVQKERIQPEDLFVCDIDEKDISCPPPQKKLKKSQCTPPFMNAYTMRGAQAVIHTHSKSAVMATLLFPGKEFRITHQEMIKGIRKGNSGTNFRYDDTLVVPIIENTPEEKDLKERMARAMDMYPDSCAVLVRRHGVYVWGETWEKAKTMCECYDYLFDIAVQMKQSGLDPSAFPTEEKGIV</sequence>
<keyword id="KW-0028">Amino-acid biosynthesis</keyword>
<keyword id="KW-0053">Apoptosis</keyword>
<keyword id="KW-0963">Cytoplasm</keyword>
<keyword id="KW-0456">Lyase</keyword>
<keyword id="KW-0479">Metal-binding</keyword>
<keyword id="KW-0486">Methionine biosynthesis</keyword>
<keyword id="KW-1185">Reference proteome</keyword>
<keyword id="KW-0862">Zinc</keyword>
<reference key="1">
    <citation type="submission" date="2004-09" db="EMBL/GenBank/DDBJ databases">
        <authorList>
            <consortium name="NIH - Zebrafish Gene Collection (ZGC) project"/>
        </authorList>
    </citation>
    <scope>NUCLEOTIDE SEQUENCE [LARGE SCALE MRNA]</scope>
    <source>
        <strain>AB</strain>
        <tissue>Liver</tissue>
    </source>
</reference>
<proteinExistence type="evidence at transcript level"/>
<name>MTNB_DANRE</name>
<feature type="chain" id="PRO_0000239025" description="Methylthioribulose-1-phosphate dehydratase">
    <location>
        <begin position="1"/>
        <end position="241"/>
    </location>
</feature>
<feature type="active site" description="Proton donor/acceptor" evidence="1">
    <location>
        <position position="138"/>
    </location>
</feature>
<feature type="binding site" evidence="1">
    <location>
        <position position="96"/>
    </location>
    <ligand>
        <name>substrate</name>
    </ligand>
</feature>
<feature type="binding site" evidence="1">
    <location>
        <position position="114"/>
    </location>
    <ligand>
        <name>Zn(2+)</name>
        <dbReference type="ChEBI" id="CHEBI:29105"/>
    </ligand>
</feature>
<feature type="binding site" evidence="1">
    <location>
        <position position="116"/>
    </location>
    <ligand>
        <name>Zn(2+)</name>
        <dbReference type="ChEBI" id="CHEBI:29105"/>
    </ligand>
</feature>
<feature type="binding site" evidence="1">
    <location>
        <position position="194"/>
    </location>
    <ligand>
        <name>Zn(2+)</name>
        <dbReference type="ChEBI" id="CHEBI:29105"/>
    </ligand>
</feature>
<dbReference type="EC" id="4.2.1.109" evidence="1"/>
<dbReference type="EMBL" id="BC081498">
    <property type="protein sequence ID" value="AAH81498.1"/>
    <property type="molecule type" value="mRNA"/>
</dbReference>
<dbReference type="RefSeq" id="NP_001004679.1">
    <property type="nucleotide sequence ID" value="NM_001004679.1"/>
</dbReference>
<dbReference type="SMR" id="Q66I75"/>
<dbReference type="FunCoup" id="Q66I75">
    <property type="interactions" value="1111"/>
</dbReference>
<dbReference type="PaxDb" id="7955-ENSDARP00000027609"/>
<dbReference type="DNASU" id="447941"/>
<dbReference type="GeneID" id="447941"/>
<dbReference type="KEGG" id="dre:447941"/>
<dbReference type="AGR" id="ZFIN:ZDB-GENE-040912-128"/>
<dbReference type="CTD" id="51074"/>
<dbReference type="ZFIN" id="ZDB-GENE-040912-128">
    <property type="gene designation" value="apip"/>
</dbReference>
<dbReference type="eggNOG" id="KOG2631">
    <property type="taxonomic scope" value="Eukaryota"/>
</dbReference>
<dbReference type="InParanoid" id="Q66I75"/>
<dbReference type="OrthoDB" id="191080at2759"/>
<dbReference type="PhylomeDB" id="Q66I75"/>
<dbReference type="Reactome" id="R-DRE-111458">
    <property type="pathway name" value="Formation of apoptosome"/>
</dbReference>
<dbReference type="Reactome" id="R-DRE-9627069">
    <property type="pathway name" value="Regulation of the apoptosome activity"/>
</dbReference>
<dbReference type="UniPathway" id="UPA00904">
    <property type="reaction ID" value="UER00875"/>
</dbReference>
<dbReference type="PRO" id="PR:Q66I75"/>
<dbReference type="Proteomes" id="UP000000437">
    <property type="component" value="Chromosome 7"/>
</dbReference>
<dbReference type="GO" id="GO:0005737">
    <property type="term" value="C:cytoplasm"/>
    <property type="evidence" value="ECO:0000318"/>
    <property type="project" value="GO_Central"/>
</dbReference>
<dbReference type="GO" id="GO:0046570">
    <property type="term" value="F:methylthioribulose 1-phosphate dehydratase activity"/>
    <property type="evidence" value="ECO:0000250"/>
    <property type="project" value="UniProtKB"/>
</dbReference>
<dbReference type="GO" id="GO:0008270">
    <property type="term" value="F:zinc ion binding"/>
    <property type="evidence" value="ECO:0000250"/>
    <property type="project" value="UniProtKB"/>
</dbReference>
<dbReference type="GO" id="GO:0006915">
    <property type="term" value="P:apoptotic process"/>
    <property type="evidence" value="ECO:0007669"/>
    <property type="project" value="UniProtKB-KW"/>
</dbReference>
<dbReference type="GO" id="GO:0019509">
    <property type="term" value="P:L-methionine salvage from methylthioadenosine"/>
    <property type="evidence" value="ECO:0000250"/>
    <property type="project" value="UniProtKB"/>
</dbReference>
<dbReference type="FunFam" id="3.40.225.10:FF:000003">
    <property type="entry name" value="Methylthioribulose-1-phosphate dehydratase"/>
    <property type="match status" value="1"/>
</dbReference>
<dbReference type="Gene3D" id="3.40.225.10">
    <property type="entry name" value="Class II aldolase/adducin N-terminal domain"/>
    <property type="match status" value="1"/>
</dbReference>
<dbReference type="HAMAP" id="MF_03116">
    <property type="entry name" value="Salvage_MtnB_euk"/>
    <property type="match status" value="1"/>
</dbReference>
<dbReference type="InterPro" id="IPR001303">
    <property type="entry name" value="Aldolase_II/adducin_N"/>
</dbReference>
<dbReference type="InterPro" id="IPR036409">
    <property type="entry name" value="Aldolase_II/adducin_N_sf"/>
</dbReference>
<dbReference type="InterPro" id="IPR017714">
    <property type="entry name" value="MethylthioRu-1-P_deHdtase_MtnB"/>
</dbReference>
<dbReference type="InterPro" id="IPR027514">
    <property type="entry name" value="Salvage_MtnB_euk"/>
</dbReference>
<dbReference type="NCBIfam" id="TIGR03328">
    <property type="entry name" value="salvage_mtnB"/>
    <property type="match status" value="1"/>
</dbReference>
<dbReference type="PANTHER" id="PTHR10640">
    <property type="entry name" value="METHYLTHIORIBULOSE-1-PHOSPHATE DEHYDRATASE"/>
    <property type="match status" value="1"/>
</dbReference>
<dbReference type="PANTHER" id="PTHR10640:SF7">
    <property type="entry name" value="METHYLTHIORIBULOSE-1-PHOSPHATE DEHYDRATASE"/>
    <property type="match status" value="1"/>
</dbReference>
<dbReference type="Pfam" id="PF00596">
    <property type="entry name" value="Aldolase_II"/>
    <property type="match status" value="1"/>
</dbReference>
<dbReference type="SMART" id="SM01007">
    <property type="entry name" value="Aldolase_II"/>
    <property type="match status" value="1"/>
</dbReference>
<dbReference type="SUPFAM" id="SSF53639">
    <property type="entry name" value="AraD/HMP-PK domain-like"/>
    <property type="match status" value="1"/>
</dbReference>
<comment type="function">
    <text evidence="1">Catalyzes the dehydration of methylthioribulose-1-phosphate (MTRu-1-P) into 2,3-diketo-5-methylthiopentyl-1-phosphate (DK-MTP-1-P). Functions in the methionine salvage pathway. May play a role in apoptosis.</text>
</comment>
<comment type="catalytic activity">
    <reaction evidence="1">
        <text>5-(methylsulfanyl)-D-ribulose 1-phosphate = 5-methylsulfanyl-2,3-dioxopentyl phosphate + H2O</text>
        <dbReference type="Rhea" id="RHEA:15549"/>
        <dbReference type="ChEBI" id="CHEBI:15377"/>
        <dbReference type="ChEBI" id="CHEBI:58548"/>
        <dbReference type="ChEBI" id="CHEBI:58828"/>
        <dbReference type="EC" id="4.2.1.109"/>
    </reaction>
</comment>
<comment type="cofactor">
    <cofactor evidence="1">
        <name>Zn(2+)</name>
        <dbReference type="ChEBI" id="CHEBI:29105"/>
    </cofactor>
    <text evidence="1">Binds 1 zinc ion per subunit.</text>
</comment>
<comment type="pathway">
    <text evidence="1">Amino-acid biosynthesis; L-methionine biosynthesis via salvage pathway; L-methionine from S-methyl-5-thio-alpha-D-ribose 1-phosphate: step 2/6.</text>
</comment>
<comment type="subcellular location">
    <subcellularLocation>
        <location evidence="1">Cytoplasm</location>
    </subcellularLocation>
</comment>
<comment type="similarity">
    <text evidence="1">Belongs to the aldolase class II family. MtnB subfamily.</text>
</comment>